<reference key="1">
    <citation type="journal article" date="2009" name="PLoS Genet.">
        <title>Organised genome dynamics in the Escherichia coli species results in highly diverse adaptive paths.</title>
        <authorList>
            <person name="Touchon M."/>
            <person name="Hoede C."/>
            <person name="Tenaillon O."/>
            <person name="Barbe V."/>
            <person name="Baeriswyl S."/>
            <person name="Bidet P."/>
            <person name="Bingen E."/>
            <person name="Bonacorsi S."/>
            <person name="Bouchier C."/>
            <person name="Bouvet O."/>
            <person name="Calteau A."/>
            <person name="Chiapello H."/>
            <person name="Clermont O."/>
            <person name="Cruveiller S."/>
            <person name="Danchin A."/>
            <person name="Diard M."/>
            <person name="Dossat C."/>
            <person name="Karoui M.E."/>
            <person name="Frapy E."/>
            <person name="Garry L."/>
            <person name="Ghigo J.M."/>
            <person name="Gilles A.M."/>
            <person name="Johnson J."/>
            <person name="Le Bouguenec C."/>
            <person name="Lescat M."/>
            <person name="Mangenot S."/>
            <person name="Martinez-Jehanne V."/>
            <person name="Matic I."/>
            <person name="Nassif X."/>
            <person name="Oztas S."/>
            <person name="Petit M.A."/>
            <person name="Pichon C."/>
            <person name="Rouy Z."/>
            <person name="Ruf C.S."/>
            <person name="Schneider D."/>
            <person name="Tourret J."/>
            <person name="Vacherie B."/>
            <person name="Vallenet D."/>
            <person name="Medigue C."/>
            <person name="Rocha E.P.C."/>
            <person name="Denamur E."/>
        </authorList>
    </citation>
    <scope>NUCLEOTIDE SEQUENCE [LARGE SCALE GENOMIC DNA]</scope>
    <source>
        <strain>IAI39 / ExPEC</strain>
    </source>
</reference>
<dbReference type="EC" id="3.2.2.-" evidence="1"/>
<dbReference type="EC" id="4.2.99.18" evidence="1"/>
<dbReference type="EMBL" id="CU928164">
    <property type="protein sequence ID" value="CAR16803.1"/>
    <property type="molecule type" value="Genomic_DNA"/>
</dbReference>
<dbReference type="RefSeq" id="WP_001113998.1">
    <property type="nucleotide sequence ID" value="NC_011750.1"/>
</dbReference>
<dbReference type="RefSeq" id="YP_002406692.1">
    <property type="nucleotide sequence ID" value="NC_011750.1"/>
</dbReference>
<dbReference type="SMR" id="B7NMR0"/>
<dbReference type="STRING" id="585057.ECIAI39_0666"/>
<dbReference type="KEGG" id="ect:ECIAI39_0666"/>
<dbReference type="PATRIC" id="fig|585057.6.peg.710"/>
<dbReference type="HOGENOM" id="CLU_038423_2_2_6"/>
<dbReference type="Proteomes" id="UP000000749">
    <property type="component" value="Chromosome"/>
</dbReference>
<dbReference type="GO" id="GO:0140078">
    <property type="term" value="F:class I DNA-(apurinic or apyrimidinic site) endonuclease activity"/>
    <property type="evidence" value="ECO:0007669"/>
    <property type="project" value="UniProtKB-EC"/>
</dbReference>
<dbReference type="GO" id="GO:0003684">
    <property type="term" value="F:damaged DNA binding"/>
    <property type="evidence" value="ECO:0007669"/>
    <property type="project" value="InterPro"/>
</dbReference>
<dbReference type="GO" id="GO:0000703">
    <property type="term" value="F:oxidized pyrimidine nucleobase lesion DNA N-glycosylase activity"/>
    <property type="evidence" value="ECO:0007669"/>
    <property type="project" value="UniProtKB-UniRule"/>
</dbReference>
<dbReference type="GO" id="GO:0008270">
    <property type="term" value="F:zinc ion binding"/>
    <property type="evidence" value="ECO:0007669"/>
    <property type="project" value="UniProtKB-UniRule"/>
</dbReference>
<dbReference type="GO" id="GO:0006284">
    <property type="term" value="P:base-excision repair"/>
    <property type="evidence" value="ECO:0007669"/>
    <property type="project" value="InterPro"/>
</dbReference>
<dbReference type="CDD" id="cd08965">
    <property type="entry name" value="EcNei-like_N"/>
    <property type="match status" value="1"/>
</dbReference>
<dbReference type="FunFam" id="1.10.8.50:FF:000005">
    <property type="entry name" value="Endonuclease 8"/>
    <property type="match status" value="1"/>
</dbReference>
<dbReference type="FunFam" id="3.20.190.10:FF:000002">
    <property type="entry name" value="Endonuclease 8"/>
    <property type="match status" value="1"/>
</dbReference>
<dbReference type="Gene3D" id="1.10.8.50">
    <property type="match status" value="1"/>
</dbReference>
<dbReference type="Gene3D" id="3.20.190.10">
    <property type="entry name" value="MutM-like, N-terminal"/>
    <property type="match status" value="1"/>
</dbReference>
<dbReference type="HAMAP" id="MF_01253">
    <property type="entry name" value="Endonuclease_8"/>
    <property type="match status" value="1"/>
</dbReference>
<dbReference type="InterPro" id="IPR015886">
    <property type="entry name" value="DNA_glyclase/AP_lyase_DNA-bd"/>
</dbReference>
<dbReference type="InterPro" id="IPR015887">
    <property type="entry name" value="DNA_glyclase_Znf_dom_DNA_BS"/>
</dbReference>
<dbReference type="InterPro" id="IPR044091">
    <property type="entry name" value="EcNei-like_N"/>
</dbReference>
<dbReference type="InterPro" id="IPR023713">
    <property type="entry name" value="Endonuclease-VIII"/>
</dbReference>
<dbReference type="InterPro" id="IPR012319">
    <property type="entry name" value="FPG_cat"/>
</dbReference>
<dbReference type="InterPro" id="IPR035937">
    <property type="entry name" value="MutM-like_N-ter"/>
</dbReference>
<dbReference type="InterPro" id="IPR010979">
    <property type="entry name" value="Ribosomal_uS13-like_H2TH"/>
</dbReference>
<dbReference type="InterPro" id="IPR000214">
    <property type="entry name" value="Znf_DNA_glyclase/AP_lyase"/>
</dbReference>
<dbReference type="InterPro" id="IPR010663">
    <property type="entry name" value="Znf_FPG/IleRS"/>
</dbReference>
<dbReference type="NCBIfam" id="NF007763">
    <property type="entry name" value="PRK10445.1"/>
    <property type="match status" value="1"/>
</dbReference>
<dbReference type="PANTHER" id="PTHR42697">
    <property type="entry name" value="ENDONUCLEASE 8"/>
    <property type="match status" value="1"/>
</dbReference>
<dbReference type="PANTHER" id="PTHR42697:SF1">
    <property type="entry name" value="ENDONUCLEASE 8"/>
    <property type="match status" value="1"/>
</dbReference>
<dbReference type="Pfam" id="PF01149">
    <property type="entry name" value="Fapy_DNA_glyco"/>
    <property type="match status" value="1"/>
</dbReference>
<dbReference type="Pfam" id="PF06831">
    <property type="entry name" value="H2TH"/>
    <property type="match status" value="1"/>
</dbReference>
<dbReference type="Pfam" id="PF06827">
    <property type="entry name" value="zf-FPG_IleRS"/>
    <property type="match status" value="1"/>
</dbReference>
<dbReference type="SMART" id="SM00898">
    <property type="entry name" value="Fapy_DNA_glyco"/>
    <property type="match status" value="1"/>
</dbReference>
<dbReference type="SMART" id="SM01232">
    <property type="entry name" value="H2TH"/>
    <property type="match status" value="1"/>
</dbReference>
<dbReference type="SUPFAM" id="SSF57716">
    <property type="entry name" value="Glucocorticoid receptor-like (DNA-binding domain)"/>
    <property type="match status" value="1"/>
</dbReference>
<dbReference type="SUPFAM" id="SSF81624">
    <property type="entry name" value="N-terminal domain of MutM-like DNA repair proteins"/>
    <property type="match status" value="1"/>
</dbReference>
<dbReference type="SUPFAM" id="SSF46946">
    <property type="entry name" value="S13-like H2TH domain"/>
    <property type="match status" value="1"/>
</dbReference>
<dbReference type="PROSITE" id="PS51068">
    <property type="entry name" value="FPG_CAT"/>
    <property type="match status" value="1"/>
</dbReference>
<dbReference type="PROSITE" id="PS01242">
    <property type="entry name" value="ZF_FPG_1"/>
    <property type="match status" value="1"/>
</dbReference>
<dbReference type="PROSITE" id="PS51066">
    <property type="entry name" value="ZF_FPG_2"/>
    <property type="match status" value="1"/>
</dbReference>
<keyword id="KW-0227">DNA damage</keyword>
<keyword id="KW-0234">DNA repair</keyword>
<keyword id="KW-0238">DNA-binding</keyword>
<keyword id="KW-0326">Glycosidase</keyword>
<keyword id="KW-0378">Hydrolase</keyword>
<keyword id="KW-0456">Lyase</keyword>
<keyword id="KW-0479">Metal-binding</keyword>
<keyword id="KW-0511">Multifunctional enzyme</keyword>
<keyword id="KW-0862">Zinc</keyword>
<keyword id="KW-0863">Zinc-finger</keyword>
<evidence type="ECO:0000255" key="1">
    <source>
        <dbReference type="HAMAP-Rule" id="MF_01253"/>
    </source>
</evidence>
<gene>
    <name evidence="1" type="primary">nei</name>
    <name type="ordered locus">ECIAI39_0666</name>
</gene>
<comment type="function">
    <text evidence="1">Involved in base excision repair of DNA damaged by oxidation or by mutagenic agents. Acts as a DNA glycosylase that recognizes and removes damaged bases. Has a preference for oxidized pyrimidines, such as thymine glycol, 5,6-dihydrouracil and 5,6-dihydrothymine. Has AP (apurinic/apyrimidinic) lyase activity and introduces nicks in the DNA strand. Cleaves the DNA backbone by beta-delta elimination to generate a single-strand break at the site of the removed base with both 3'- and 5'-phosphates.</text>
</comment>
<comment type="catalytic activity">
    <reaction evidence="1">
        <text>2'-deoxyribonucleotide-(2'-deoxyribose 5'-phosphate)-2'-deoxyribonucleotide-DNA = a 3'-end 2'-deoxyribonucleotide-(2,3-dehydro-2,3-deoxyribose 5'-phosphate)-DNA + a 5'-end 5'-phospho-2'-deoxyribonucleoside-DNA + H(+)</text>
        <dbReference type="Rhea" id="RHEA:66592"/>
        <dbReference type="Rhea" id="RHEA-COMP:13180"/>
        <dbReference type="Rhea" id="RHEA-COMP:16897"/>
        <dbReference type="Rhea" id="RHEA-COMP:17067"/>
        <dbReference type="ChEBI" id="CHEBI:15378"/>
        <dbReference type="ChEBI" id="CHEBI:136412"/>
        <dbReference type="ChEBI" id="CHEBI:157695"/>
        <dbReference type="ChEBI" id="CHEBI:167181"/>
        <dbReference type="EC" id="4.2.99.18"/>
    </reaction>
</comment>
<comment type="cofactor">
    <cofactor evidence="1">
        <name>Zn(2+)</name>
        <dbReference type="ChEBI" id="CHEBI:29105"/>
    </cofactor>
    <text evidence="1">Binds 1 zinc ion per subunit.</text>
</comment>
<comment type="similarity">
    <text evidence="1">Belongs to the FPG family.</text>
</comment>
<protein>
    <recommendedName>
        <fullName evidence="1">Endonuclease 8</fullName>
    </recommendedName>
    <alternativeName>
        <fullName evidence="1">DNA glycosylase/AP lyase Nei</fullName>
        <ecNumber evidence="1">3.2.2.-</ecNumber>
        <ecNumber evidence="1">4.2.99.18</ecNumber>
    </alternativeName>
    <alternativeName>
        <fullName evidence="1">DNA-(apurinic or apyrimidinic site) lyase Nei</fullName>
    </alternativeName>
    <alternativeName>
        <fullName evidence="1">Endonuclease VIII</fullName>
    </alternativeName>
</protein>
<organism>
    <name type="scientific">Escherichia coli O7:K1 (strain IAI39 / ExPEC)</name>
    <dbReference type="NCBI Taxonomy" id="585057"/>
    <lineage>
        <taxon>Bacteria</taxon>
        <taxon>Pseudomonadati</taxon>
        <taxon>Pseudomonadota</taxon>
        <taxon>Gammaproteobacteria</taxon>
        <taxon>Enterobacterales</taxon>
        <taxon>Enterobacteriaceae</taxon>
        <taxon>Escherichia</taxon>
    </lineage>
</organism>
<feature type="initiator methionine" description="Removed" evidence="1">
    <location>
        <position position="1"/>
    </location>
</feature>
<feature type="chain" id="PRO_1000139932" description="Endonuclease 8">
    <location>
        <begin position="2"/>
        <end position="263"/>
    </location>
</feature>
<feature type="zinc finger region" description="FPG-type" evidence="1">
    <location>
        <begin position="229"/>
        <end position="263"/>
    </location>
</feature>
<feature type="active site" description="Schiff-base intermediate with DNA" evidence="1">
    <location>
        <position position="2"/>
    </location>
</feature>
<feature type="active site" description="Proton donor" evidence="1">
    <location>
        <position position="3"/>
    </location>
</feature>
<feature type="active site" description="Proton donor; for beta-elimination activity" evidence="1">
    <location>
        <position position="53"/>
    </location>
</feature>
<feature type="active site" description="Proton donor; for delta-elimination activity" evidence="1">
    <location>
        <position position="253"/>
    </location>
</feature>
<feature type="binding site" evidence="1">
    <location>
        <position position="70"/>
    </location>
    <ligand>
        <name>DNA</name>
        <dbReference type="ChEBI" id="CHEBI:16991"/>
    </ligand>
</feature>
<feature type="binding site" evidence="1">
    <location>
        <position position="125"/>
    </location>
    <ligand>
        <name>DNA</name>
        <dbReference type="ChEBI" id="CHEBI:16991"/>
    </ligand>
</feature>
<feature type="binding site" evidence="1">
    <location>
        <position position="169"/>
    </location>
    <ligand>
        <name>DNA</name>
        <dbReference type="ChEBI" id="CHEBI:16991"/>
    </ligand>
</feature>
<accession>B7NMR0</accession>
<sequence>MPEGPEIRRAADNLEAAIKGKPLTDVWFAFPQLKSYQSQLIGQHVTHVETRGKALLTHFSNELTLYSHNQLYGVWRVVDTGEEPQTTRVLRVKLQTADKTILLYSASDIEMLTPEQLTTHPFLQRVGPDVLDPNLTPEVVKERLLSPRFRNRQFAGLLLDQAFLAGLGNYLRVEILWQVGLTGNHKAKDLNAAQLDALAHALLDIPRLSYATRGQVDENKHHGALFRFKVFHRDGELCERCGGIIEKTTLSSRPFYWCPGCQH</sequence>
<proteinExistence type="inferred from homology"/>
<name>END8_ECO7I</name>